<protein>
    <recommendedName>
        <fullName evidence="1">S-adenosylmethionine synthase</fullName>
        <shortName evidence="1">AdoMet synthase</shortName>
        <ecNumber evidence="1">2.5.1.6</ecNumber>
    </recommendedName>
    <alternativeName>
        <fullName evidence="1">MAT</fullName>
    </alternativeName>
    <alternativeName>
        <fullName evidence="1">Methionine adenosyltransferase</fullName>
    </alternativeName>
</protein>
<accession>B2INE5</accession>
<keyword id="KW-0067">ATP-binding</keyword>
<keyword id="KW-0963">Cytoplasm</keyword>
<keyword id="KW-0460">Magnesium</keyword>
<keyword id="KW-0479">Metal-binding</keyword>
<keyword id="KW-0547">Nucleotide-binding</keyword>
<keyword id="KW-0554">One-carbon metabolism</keyword>
<keyword id="KW-0630">Potassium</keyword>
<keyword id="KW-0808">Transferase</keyword>
<proteinExistence type="inferred from homology"/>
<name>METK_STRPS</name>
<organism>
    <name type="scientific">Streptococcus pneumoniae (strain CGSP14)</name>
    <dbReference type="NCBI Taxonomy" id="516950"/>
    <lineage>
        <taxon>Bacteria</taxon>
        <taxon>Bacillati</taxon>
        <taxon>Bacillota</taxon>
        <taxon>Bacilli</taxon>
        <taxon>Lactobacillales</taxon>
        <taxon>Streptococcaceae</taxon>
        <taxon>Streptococcus</taxon>
    </lineage>
</organism>
<evidence type="ECO:0000255" key="1">
    <source>
        <dbReference type="HAMAP-Rule" id="MF_00086"/>
    </source>
</evidence>
<sequence>MSERKLFTSESVSEGHPDKIADQISDAILDAILAKDPEAHVAAETAVYTGSVHVFGEISTNAYVDINRVVRDTIAEIGYTNTEYGFSAETVGVHPSLVEQSPDIAQGVNEALEVRGNADQDPLDLIGAGDQGLMFGFAVDETEELMPLPIALSHKLVRRLAELRKSGEISYLRPDAKSQVTVEYDENDRPVRVDTVVISTQHDPEATNEQIHQDVIDKVIKEVIPSSYLDDKTKFFINPTGRFVIGGPQGDSGLTGRKIIVDTYGGYSRHGGGAFSGKDATKVDRSASYAARYIAKNIVAAGLAKKAEVQLAYAIGVAQPVSVRIDTFGTGTVAESQLEKAARQIFDLRPAGIIQMLDLKRPIYRQTSAYGHMGRTDIDLPWERLDKVDALKEAVK</sequence>
<comment type="function">
    <text evidence="1">Catalyzes the formation of S-adenosylmethionine (AdoMet) from methionine and ATP. The overall synthetic reaction is composed of two sequential steps, AdoMet formation and the subsequent tripolyphosphate hydrolysis which occurs prior to release of AdoMet from the enzyme.</text>
</comment>
<comment type="catalytic activity">
    <reaction evidence="1">
        <text>L-methionine + ATP + H2O = S-adenosyl-L-methionine + phosphate + diphosphate</text>
        <dbReference type="Rhea" id="RHEA:21080"/>
        <dbReference type="ChEBI" id="CHEBI:15377"/>
        <dbReference type="ChEBI" id="CHEBI:30616"/>
        <dbReference type="ChEBI" id="CHEBI:33019"/>
        <dbReference type="ChEBI" id="CHEBI:43474"/>
        <dbReference type="ChEBI" id="CHEBI:57844"/>
        <dbReference type="ChEBI" id="CHEBI:59789"/>
        <dbReference type="EC" id="2.5.1.6"/>
    </reaction>
</comment>
<comment type="cofactor">
    <cofactor evidence="1">
        <name>Mg(2+)</name>
        <dbReference type="ChEBI" id="CHEBI:18420"/>
    </cofactor>
    <text evidence="1">Binds 2 divalent ions per subunit.</text>
</comment>
<comment type="cofactor">
    <cofactor evidence="1">
        <name>K(+)</name>
        <dbReference type="ChEBI" id="CHEBI:29103"/>
    </cofactor>
    <text evidence="1">Binds 1 potassium ion per subunit.</text>
</comment>
<comment type="pathway">
    <text evidence="1">Amino-acid biosynthesis; S-adenosyl-L-methionine biosynthesis; S-adenosyl-L-methionine from L-methionine: step 1/1.</text>
</comment>
<comment type="subunit">
    <text evidence="1">Homotetramer; dimer of dimers.</text>
</comment>
<comment type="subcellular location">
    <subcellularLocation>
        <location evidence="1">Cytoplasm</location>
    </subcellularLocation>
</comment>
<comment type="similarity">
    <text evidence="1">Belongs to the AdoMet synthase family.</text>
</comment>
<reference key="1">
    <citation type="journal article" date="2009" name="BMC Genomics">
        <title>Genome evolution driven by host adaptations results in a more virulent and antimicrobial-resistant Streptococcus pneumoniae serotype 14.</title>
        <authorList>
            <person name="Ding F."/>
            <person name="Tang P."/>
            <person name="Hsu M.-H."/>
            <person name="Cui P."/>
            <person name="Hu S."/>
            <person name="Yu J."/>
            <person name="Chiu C.-H."/>
        </authorList>
    </citation>
    <scope>NUCLEOTIDE SEQUENCE [LARGE SCALE GENOMIC DNA]</scope>
    <source>
        <strain>CGSP14</strain>
    </source>
</reference>
<gene>
    <name evidence="1" type="primary">metK</name>
    <name type="ordered locus">SPCG_0712</name>
</gene>
<dbReference type="EC" id="2.5.1.6" evidence="1"/>
<dbReference type="EMBL" id="CP001033">
    <property type="protein sequence ID" value="ACB89964.1"/>
    <property type="molecule type" value="Genomic_DNA"/>
</dbReference>
<dbReference type="RefSeq" id="WP_000003935.1">
    <property type="nucleotide sequence ID" value="NC_010582.1"/>
</dbReference>
<dbReference type="SMR" id="B2INE5"/>
<dbReference type="KEGG" id="spw:SPCG_0712"/>
<dbReference type="HOGENOM" id="CLU_041802_1_1_9"/>
<dbReference type="UniPathway" id="UPA00315">
    <property type="reaction ID" value="UER00080"/>
</dbReference>
<dbReference type="GO" id="GO:0005737">
    <property type="term" value="C:cytoplasm"/>
    <property type="evidence" value="ECO:0007669"/>
    <property type="project" value="UniProtKB-SubCell"/>
</dbReference>
<dbReference type="GO" id="GO:0005524">
    <property type="term" value="F:ATP binding"/>
    <property type="evidence" value="ECO:0007669"/>
    <property type="project" value="UniProtKB-UniRule"/>
</dbReference>
<dbReference type="GO" id="GO:0000287">
    <property type="term" value="F:magnesium ion binding"/>
    <property type="evidence" value="ECO:0007669"/>
    <property type="project" value="UniProtKB-UniRule"/>
</dbReference>
<dbReference type="GO" id="GO:0004478">
    <property type="term" value="F:methionine adenosyltransferase activity"/>
    <property type="evidence" value="ECO:0007669"/>
    <property type="project" value="UniProtKB-UniRule"/>
</dbReference>
<dbReference type="GO" id="GO:0006730">
    <property type="term" value="P:one-carbon metabolic process"/>
    <property type="evidence" value="ECO:0007669"/>
    <property type="project" value="UniProtKB-KW"/>
</dbReference>
<dbReference type="GO" id="GO:0006556">
    <property type="term" value="P:S-adenosylmethionine biosynthetic process"/>
    <property type="evidence" value="ECO:0007669"/>
    <property type="project" value="UniProtKB-UniRule"/>
</dbReference>
<dbReference type="CDD" id="cd18079">
    <property type="entry name" value="S-AdoMet_synt"/>
    <property type="match status" value="1"/>
</dbReference>
<dbReference type="FunFam" id="3.30.300.10:FF:000003">
    <property type="entry name" value="S-adenosylmethionine synthase"/>
    <property type="match status" value="1"/>
</dbReference>
<dbReference type="Gene3D" id="3.30.300.10">
    <property type="match status" value="3"/>
</dbReference>
<dbReference type="HAMAP" id="MF_00086">
    <property type="entry name" value="S_AdoMet_synth1"/>
    <property type="match status" value="1"/>
</dbReference>
<dbReference type="InterPro" id="IPR022631">
    <property type="entry name" value="ADOMET_SYNTHASE_CS"/>
</dbReference>
<dbReference type="InterPro" id="IPR022630">
    <property type="entry name" value="S-AdoMet_synt_C"/>
</dbReference>
<dbReference type="InterPro" id="IPR022629">
    <property type="entry name" value="S-AdoMet_synt_central"/>
</dbReference>
<dbReference type="InterPro" id="IPR022628">
    <property type="entry name" value="S-AdoMet_synt_N"/>
</dbReference>
<dbReference type="InterPro" id="IPR002133">
    <property type="entry name" value="S-AdoMet_synthetase"/>
</dbReference>
<dbReference type="InterPro" id="IPR022636">
    <property type="entry name" value="S-AdoMet_synthetase_sfam"/>
</dbReference>
<dbReference type="NCBIfam" id="TIGR01034">
    <property type="entry name" value="metK"/>
    <property type="match status" value="1"/>
</dbReference>
<dbReference type="PANTHER" id="PTHR11964">
    <property type="entry name" value="S-ADENOSYLMETHIONINE SYNTHETASE"/>
    <property type="match status" value="1"/>
</dbReference>
<dbReference type="Pfam" id="PF02773">
    <property type="entry name" value="S-AdoMet_synt_C"/>
    <property type="match status" value="1"/>
</dbReference>
<dbReference type="Pfam" id="PF02772">
    <property type="entry name" value="S-AdoMet_synt_M"/>
    <property type="match status" value="1"/>
</dbReference>
<dbReference type="Pfam" id="PF00438">
    <property type="entry name" value="S-AdoMet_synt_N"/>
    <property type="match status" value="1"/>
</dbReference>
<dbReference type="PIRSF" id="PIRSF000497">
    <property type="entry name" value="MAT"/>
    <property type="match status" value="1"/>
</dbReference>
<dbReference type="SUPFAM" id="SSF55973">
    <property type="entry name" value="S-adenosylmethionine synthetase"/>
    <property type="match status" value="3"/>
</dbReference>
<dbReference type="PROSITE" id="PS00376">
    <property type="entry name" value="ADOMET_SYNTHASE_1"/>
    <property type="match status" value="1"/>
</dbReference>
<dbReference type="PROSITE" id="PS00377">
    <property type="entry name" value="ADOMET_SYNTHASE_2"/>
    <property type="match status" value="1"/>
</dbReference>
<feature type="chain" id="PRO_1000093093" description="S-adenosylmethionine synthase">
    <location>
        <begin position="1"/>
        <end position="396"/>
    </location>
</feature>
<feature type="region of interest" description="Flexible loop" evidence="1">
    <location>
        <begin position="100"/>
        <end position="110"/>
    </location>
</feature>
<feature type="binding site" description="in other chain" evidence="1">
    <location>
        <position position="16"/>
    </location>
    <ligand>
        <name>ATP</name>
        <dbReference type="ChEBI" id="CHEBI:30616"/>
        <note>ligand shared between two neighboring subunits</note>
    </ligand>
</feature>
<feature type="binding site" evidence="1">
    <location>
        <position position="18"/>
    </location>
    <ligand>
        <name>Mg(2+)</name>
        <dbReference type="ChEBI" id="CHEBI:18420"/>
    </ligand>
</feature>
<feature type="binding site" evidence="1">
    <location>
        <position position="44"/>
    </location>
    <ligand>
        <name>K(+)</name>
        <dbReference type="ChEBI" id="CHEBI:29103"/>
    </ligand>
</feature>
<feature type="binding site" description="in other chain" evidence="1">
    <location>
        <position position="57"/>
    </location>
    <ligand>
        <name>L-methionine</name>
        <dbReference type="ChEBI" id="CHEBI:57844"/>
        <note>ligand shared between two neighboring subunits</note>
    </ligand>
</feature>
<feature type="binding site" description="in other chain" evidence="1">
    <location>
        <position position="100"/>
    </location>
    <ligand>
        <name>L-methionine</name>
        <dbReference type="ChEBI" id="CHEBI:57844"/>
        <note>ligand shared between two neighboring subunits</note>
    </ligand>
</feature>
<feature type="binding site" description="in other chain" evidence="1">
    <location>
        <begin position="175"/>
        <end position="177"/>
    </location>
    <ligand>
        <name>ATP</name>
        <dbReference type="ChEBI" id="CHEBI:30616"/>
        <note>ligand shared between two neighboring subunits</note>
    </ligand>
</feature>
<feature type="binding site" description="in other chain" evidence="1">
    <location>
        <begin position="242"/>
        <end position="243"/>
    </location>
    <ligand>
        <name>ATP</name>
        <dbReference type="ChEBI" id="CHEBI:30616"/>
        <note>ligand shared between two neighboring subunits</note>
    </ligand>
</feature>
<feature type="binding site" evidence="1">
    <location>
        <position position="251"/>
    </location>
    <ligand>
        <name>ATP</name>
        <dbReference type="ChEBI" id="CHEBI:30616"/>
        <note>ligand shared between two neighboring subunits</note>
    </ligand>
</feature>
<feature type="binding site" evidence="1">
    <location>
        <position position="251"/>
    </location>
    <ligand>
        <name>L-methionine</name>
        <dbReference type="ChEBI" id="CHEBI:57844"/>
        <note>ligand shared between two neighboring subunits</note>
    </ligand>
</feature>
<feature type="binding site" description="in other chain" evidence="1">
    <location>
        <begin position="257"/>
        <end position="258"/>
    </location>
    <ligand>
        <name>ATP</name>
        <dbReference type="ChEBI" id="CHEBI:30616"/>
        <note>ligand shared between two neighboring subunits</note>
    </ligand>
</feature>
<feature type="binding site" evidence="1">
    <location>
        <position position="274"/>
    </location>
    <ligand>
        <name>ATP</name>
        <dbReference type="ChEBI" id="CHEBI:30616"/>
        <note>ligand shared between two neighboring subunits</note>
    </ligand>
</feature>
<feature type="binding site" evidence="1">
    <location>
        <position position="278"/>
    </location>
    <ligand>
        <name>ATP</name>
        <dbReference type="ChEBI" id="CHEBI:30616"/>
        <note>ligand shared between two neighboring subunits</note>
    </ligand>
</feature>
<feature type="binding site" description="in other chain" evidence="1">
    <location>
        <position position="282"/>
    </location>
    <ligand>
        <name>L-methionine</name>
        <dbReference type="ChEBI" id="CHEBI:57844"/>
        <note>ligand shared between two neighboring subunits</note>
    </ligand>
</feature>